<feature type="chain" id="PRO_0000377481" description="Phosphorelay intermediate protein rdeA">
    <location>
        <begin position="1"/>
        <end position="254"/>
    </location>
</feature>
<feature type="domain" description="HPt" evidence="1">
    <location>
        <begin position="26"/>
        <end position="123"/>
    </location>
</feature>
<feature type="region of interest" description="Disordered" evidence="2">
    <location>
        <begin position="124"/>
        <end position="254"/>
    </location>
</feature>
<feature type="compositionally biased region" description="Acidic residues" evidence="2">
    <location>
        <begin position="131"/>
        <end position="143"/>
    </location>
</feature>
<feature type="compositionally biased region" description="Low complexity" evidence="2">
    <location>
        <begin position="146"/>
        <end position="160"/>
    </location>
</feature>
<feature type="compositionally biased region" description="Basic and acidic residues" evidence="2">
    <location>
        <begin position="166"/>
        <end position="186"/>
    </location>
</feature>
<feature type="compositionally biased region" description="Low complexity" evidence="2">
    <location>
        <begin position="220"/>
        <end position="238"/>
    </location>
</feature>
<feature type="compositionally biased region" description="Polar residues" evidence="2">
    <location>
        <begin position="239"/>
        <end position="254"/>
    </location>
</feature>
<feature type="modified residue" description="Phosphohistidine" evidence="1">
    <location>
        <position position="65"/>
    </location>
</feature>
<feature type="mutagenesis site" description="No change." evidence="3 7">
    <original>H</original>
    <variation>Q</variation>
    <location>
        <position position="63"/>
    </location>
</feature>
<feature type="mutagenesis site" description="Loss of phosphorylation." evidence="3 7">
    <original>H</original>
    <variation>Q</variation>
    <location>
        <position position="65"/>
    </location>
</feature>
<feature type="sequence conflict" description="In Ref. 1; AAC61850." evidence="9" ref="1">
    <original>G</original>
    <variation>C</variation>
    <location>
        <position position="162"/>
    </location>
</feature>
<feature type="sequence conflict" description="In Ref. 1; AAC61850." evidence="9" ref="1">
    <original>E</original>
    <variation>K</variation>
    <location>
        <position position="175"/>
    </location>
</feature>
<feature type="sequence conflict" description="In Ref. 1; AAC61850." evidence="9" ref="1">
    <original>E</original>
    <variation>G</variation>
    <location>
        <position position="183"/>
    </location>
</feature>
<evidence type="ECO:0000255" key="1">
    <source>
        <dbReference type="PROSITE-ProRule" id="PRU00110"/>
    </source>
</evidence>
<evidence type="ECO:0000256" key="2">
    <source>
        <dbReference type="SAM" id="MobiDB-lite"/>
    </source>
</evidence>
<evidence type="ECO:0000269" key="3">
    <source>
    </source>
</evidence>
<evidence type="ECO:0000269" key="4">
    <source>
    </source>
</evidence>
<evidence type="ECO:0000269" key="5">
    <source>
    </source>
</evidence>
<evidence type="ECO:0000269" key="6">
    <source>
    </source>
</evidence>
<evidence type="ECO:0000269" key="7">
    <source>
    </source>
</evidence>
<evidence type="ECO:0000269" key="8">
    <source>
    </source>
</evidence>
<evidence type="ECO:0000305" key="9"/>
<dbReference type="EMBL" id="AF051931">
    <property type="protein sequence ID" value="AAC61850.1"/>
    <property type="molecule type" value="mRNA"/>
</dbReference>
<dbReference type="EMBL" id="AAFI02000049">
    <property type="protein sequence ID" value="EAL65905.1"/>
    <property type="molecule type" value="Genomic_DNA"/>
</dbReference>
<dbReference type="RefSeq" id="XP_639283.1">
    <property type="nucleotide sequence ID" value="XM_634191.1"/>
</dbReference>
<dbReference type="SMR" id="Q54RR8"/>
<dbReference type="FunCoup" id="Q54RR8">
    <property type="interactions" value="267"/>
</dbReference>
<dbReference type="STRING" id="44689.Q54RR8"/>
<dbReference type="GlyGen" id="Q54RR8">
    <property type="glycosylation" value="1 site"/>
</dbReference>
<dbReference type="PaxDb" id="44689-DDB0191140"/>
<dbReference type="EnsemblProtists" id="EAL65905">
    <property type="protein sequence ID" value="EAL65905"/>
    <property type="gene ID" value="DDB_G0282923"/>
</dbReference>
<dbReference type="GeneID" id="8623852"/>
<dbReference type="KEGG" id="ddi:DDB_G0282923"/>
<dbReference type="dictyBase" id="DDB_G0282923">
    <property type="gene designation" value="rdeA"/>
</dbReference>
<dbReference type="VEuPathDB" id="AmoebaDB:DDB_G0282923"/>
<dbReference type="eggNOG" id="ENOG502RHQ7">
    <property type="taxonomic scope" value="Eukaryota"/>
</dbReference>
<dbReference type="HOGENOM" id="CLU_1095938_0_0_1"/>
<dbReference type="InParanoid" id="Q54RR8"/>
<dbReference type="OMA" id="AYCKNDE"/>
<dbReference type="PRO" id="PR:Q54RR8"/>
<dbReference type="Proteomes" id="UP000002195">
    <property type="component" value="Chromosome 4"/>
</dbReference>
<dbReference type="GO" id="GO:0005737">
    <property type="term" value="C:cytoplasm"/>
    <property type="evidence" value="ECO:0000318"/>
    <property type="project" value="GO_Central"/>
</dbReference>
<dbReference type="GO" id="GO:0005829">
    <property type="term" value="C:cytosol"/>
    <property type="evidence" value="ECO:0000314"/>
    <property type="project" value="dictyBase"/>
</dbReference>
<dbReference type="GO" id="GO:0005634">
    <property type="term" value="C:nucleus"/>
    <property type="evidence" value="ECO:0000318"/>
    <property type="project" value="GO_Central"/>
</dbReference>
<dbReference type="GO" id="GO:0009927">
    <property type="term" value="F:histidine phosphotransfer kinase activity"/>
    <property type="evidence" value="ECO:0000314"/>
    <property type="project" value="dictyBase"/>
</dbReference>
<dbReference type="GO" id="GO:0043424">
    <property type="term" value="F:protein histidine kinase binding"/>
    <property type="evidence" value="ECO:0000318"/>
    <property type="project" value="GO_Central"/>
</dbReference>
<dbReference type="GO" id="GO:0000160">
    <property type="term" value="P:phosphorelay signal transduction system"/>
    <property type="evidence" value="ECO:0000314"/>
    <property type="project" value="dictyBase"/>
</dbReference>
<dbReference type="GO" id="GO:0061128">
    <property type="term" value="P:positive regulation of chemotaxis to cAMP by DIF-2"/>
    <property type="evidence" value="ECO:0000315"/>
    <property type="project" value="dictyBase"/>
</dbReference>
<dbReference type="GO" id="GO:0030587">
    <property type="term" value="P:sorocarp development"/>
    <property type="evidence" value="ECO:0000315"/>
    <property type="project" value="dictyBase"/>
</dbReference>
<dbReference type="GO" id="GO:0031288">
    <property type="term" value="P:sorocarp morphogenesis"/>
    <property type="evidence" value="ECO:0000315"/>
    <property type="project" value="dictyBase"/>
</dbReference>
<dbReference type="GO" id="GO:0030435">
    <property type="term" value="P:sporulation resulting in formation of a cellular spore"/>
    <property type="evidence" value="ECO:0000316"/>
    <property type="project" value="dictyBase"/>
</dbReference>
<dbReference type="FunFam" id="1.20.120.160:FF:000015">
    <property type="entry name" value="Hybrid sensor kinase RscS"/>
    <property type="match status" value="1"/>
</dbReference>
<dbReference type="Gene3D" id="1.20.120.160">
    <property type="entry name" value="HPT domain"/>
    <property type="match status" value="1"/>
</dbReference>
<dbReference type="InterPro" id="IPR045871">
    <property type="entry name" value="AHP1-5/YPD1"/>
</dbReference>
<dbReference type="InterPro" id="IPR036641">
    <property type="entry name" value="HPT_dom_sf"/>
</dbReference>
<dbReference type="InterPro" id="IPR008207">
    <property type="entry name" value="Sig_transdc_His_kin_Hpt_dom"/>
</dbReference>
<dbReference type="PANTHER" id="PTHR28242">
    <property type="entry name" value="PHOSPHORELAY INTERMEDIATE PROTEIN YPD1"/>
    <property type="match status" value="1"/>
</dbReference>
<dbReference type="PANTHER" id="PTHR28242:SF52">
    <property type="entry name" value="PHOSPHORELAY INTERMEDIATE PROTEIN YPD1"/>
    <property type="match status" value="1"/>
</dbReference>
<dbReference type="Pfam" id="PF01627">
    <property type="entry name" value="Hpt"/>
    <property type="match status" value="1"/>
</dbReference>
<dbReference type="SUPFAM" id="SSF47226">
    <property type="entry name" value="Histidine-containing phosphotransfer domain, HPT domain"/>
    <property type="match status" value="1"/>
</dbReference>
<dbReference type="PROSITE" id="PS50894">
    <property type="entry name" value="HPT"/>
    <property type="match status" value="1"/>
</dbReference>
<gene>
    <name type="primary">rdeA</name>
    <name type="ORF">DDB_G0282923</name>
</gene>
<accession>Q54RR8</accession>
<accession>O77083</accession>
<comment type="function">
    <text evidence="3">Phosphorelay protein that supplies phosphate to regA or accepts phosphate from regA; depending on the relative concentration of the phosphodonor proteins. In vitro, acts as a substrate for cheA (bacterial kinase). Plays a role in the development. ypd1 (yeast) can complement rdeA defect.</text>
</comment>
<comment type="subcellular location">
    <subcellularLocation>
        <location evidence="7">Cytoplasm</location>
    </subcellularLocation>
</comment>
<comment type="developmental stage">
    <text evidence="7">Expressed early in development in the form of precocious cell aggregation. Expressed at a significant level during vegetative growth and peaks at 8-16 hours of development. Even at its peak, the level of expression is low.</text>
</comment>
<comment type="PTM">
    <text>The phosphorelay mechanism involves the sequential transfer of a phosphate group from 'Asp-212' of pde2 to His-65 of rdeA. In vitro, dephosphorylated by dokA.</text>
</comment>
<comment type="disruption phenotype">
    <text evidence="3 4 5 6 7 8">Final morphogenesis aberrant, rapid development (body formation accelerated), premature spore maturation and elevated levels of cAMP. PkaR and rdeA double mutants are rapidly developing and sporogenous. acaA and rdeA double mutant forms only a very small number of spores and no cAMP synthesis.</text>
</comment>
<name>RDEA_DICDI</name>
<sequence length="254" mass="27893">MISDYEGPTPTKKFDQDILFDYSEGEKEFTFELLDSYISSVEEHLPELLNSFEAKDLKGAVLHSHDIKGSSSYIGCEAVRYVSGKIEAYCKNDELEKAESFYPELKKEVEEVFKILSDFKKNWDKNHGEGGSDDGGDDNESEPTENNNNDGSSVNNNDSSSGGGGKDIENKNTDENTGKNLNERSKSPVPLQTTLKPVTIETPKTASDKIATETPTSLANNTNSSSNNNSKNENGLNSKQPQTSSNSPTKIQTK</sequence>
<organism>
    <name type="scientific">Dictyostelium discoideum</name>
    <name type="common">Social amoeba</name>
    <dbReference type="NCBI Taxonomy" id="44689"/>
    <lineage>
        <taxon>Eukaryota</taxon>
        <taxon>Amoebozoa</taxon>
        <taxon>Evosea</taxon>
        <taxon>Eumycetozoa</taxon>
        <taxon>Dictyostelia</taxon>
        <taxon>Dictyosteliales</taxon>
        <taxon>Dictyosteliaceae</taxon>
        <taxon>Dictyostelium</taxon>
    </lineage>
</organism>
<reference key="1">
    <citation type="journal article" date="1998" name="EMBO J.">
        <title>Evidence that the RdeA protein is a component of a multistep phosphorelay modulating rate of development in Dictyostelium.</title>
        <authorList>
            <person name="Chang W.-T."/>
            <person name="Thomason P.A."/>
            <person name="Gross J.D."/>
            <person name="Neweil P.C."/>
        </authorList>
    </citation>
    <scope>NUCLEOTIDE SEQUENCE [MRNA]</scope>
    <scope>DISRUPTION PHENOTYPE</scope>
    <scope>DEVELOPMENTAL STAGE</scope>
    <scope>SUBCELLULAR LOCATION</scope>
    <scope>MUTAGENESIS OF HIS-63 AND HIS-65</scope>
    <source>
        <strain>NC-4</strain>
    </source>
</reference>
<reference key="2">
    <citation type="journal article" date="2005" name="Nature">
        <title>The genome of the social amoeba Dictyostelium discoideum.</title>
        <authorList>
            <person name="Eichinger L."/>
            <person name="Pachebat J.A."/>
            <person name="Gloeckner G."/>
            <person name="Rajandream M.A."/>
            <person name="Sucgang R."/>
            <person name="Berriman M."/>
            <person name="Song J."/>
            <person name="Olsen R."/>
            <person name="Szafranski K."/>
            <person name="Xu Q."/>
            <person name="Tunggal B."/>
            <person name="Kummerfeld S."/>
            <person name="Madera M."/>
            <person name="Konfortov B.A."/>
            <person name="Rivero F."/>
            <person name="Bankier A.T."/>
            <person name="Lehmann R."/>
            <person name="Hamlin N."/>
            <person name="Davies R."/>
            <person name="Gaudet P."/>
            <person name="Fey P."/>
            <person name="Pilcher K."/>
            <person name="Chen G."/>
            <person name="Saunders D."/>
            <person name="Sodergren E.J."/>
            <person name="Davis P."/>
            <person name="Kerhornou A."/>
            <person name="Nie X."/>
            <person name="Hall N."/>
            <person name="Anjard C."/>
            <person name="Hemphill L."/>
            <person name="Bason N."/>
            <person name="Farbrother P."/>
            <person name="Desany B."/>
            <person name="Just E."/>
            <person name="Morio T."/>
            <person name="Rost R."/>
            <person name="Churcher C.M."/>
            <person name="Cooper J."/>
            <person name="Haydock S."/>
            <person name="van Driessche N."/>
            <person name="Cronin A."/>
            <person name="Goodhead I."/>
            <person name="Muzny D.M."/>
            <person name="Mourier T."/>
            <person name="Pain A."/>
            <person name="Lu M."/>
            <person name="Harper D."/>
            <person name="Lindsay R."/>
            <person name="Hauser H."/>
            <person name="James K.D."/>
            <person name="Quiles M."/>
            <person name="Madan Babu M."/>
            <person name="Saito T."/>
            <person name="Buchrieser C."/>
            <person name="Wardroper A."/>
            <person name="Felder M."/>
            <person name="Thangavelu M."/>
            <person name="Johnson D."/>
            <person name="Knights A."/>
            <person name="Loulseged H."/>
            <person name="Mungall K.L."/>
            <person name="Oliver K."/>
            <person name="Price C."/>
            <person name="Quail M.A."/>
            <person name="Urushihara H."/>
            <person name="Hernandez J."/>
            <person name="Rabbinowitsch E."/>
            <person name="Steffen D."/>
            <person name="Sanders M."/>
            <person name="Ma J."/>
            <person name="Kohara Y."/>
            <person name="Sharp S."/>
            <person name="Simmonds M.N."/>
            <person name="Spiegler S."/>
            <person name="Tivey A."/>
            <person name="Sugano S."/>
            <person name="White B."/>
            <person name="Walker D."/>
            <person name="Woodward J.R."/>
            <person name="Winckler T."/>
            <person name="Tanaka Y."/>
            <person name="Shaulsky G."/>
            <person name="Schleicher M."/>
            <person name="Weinstock G.M."/>
            <person name="Rosenthal A."/>
            <person name="Cox E.C."/>
            <person name="Chisholm R.L."/>
            <person name="Gibbs R.A."/>
            <person name="Loomis W.F."/>
            <person name="Platzer M."/>
            <person name="Kay R.R."/>
            <person name="Williams J.G."/>
            <person name="Dear P.H."/>
            <person name="Noegel A.A."/>
            <person name="Barrell B.G."/>
            <person name="Kuspa A."/>
        </authorList>
    </citation>
    <scope>NUCLEOTIDE SEQUENCE [LARGE SCALE GENOMIC DNA]</scope>
    <source>
        <strain>AX4</strain>
    </source>
</reference>
<reference key="3">
    <citation type="journal article" date="1983" name="Dev. Biol.">
        <title>A new class of rapidly developing mutants in Dictyostelium discoideum: implications for cyclic AMP metabolism and cell differentiation.</title>
        <authorList>
            <person name="Abe K."/>
            <person name="Yanagisawa K."/>
        </authorList>
    </citation>
    <scope>DISRUPTION PHENOTYPE</scope>
</reference>
<reference key="4">
    <citation type="journal article" date="1998" name="J. Biol. Chem.">
        <title>A novel adenylyl cyclase detected in rapidly developing mutants of Dictyostelium.</title>
        <authorList>
            <person name="Kim H.-J."/>
            <person name="Chang W.-T."/>
            <person name="Meima M."/>
            <person name="Gross J.D."/>
            <person name="Schaap P."/>
        </authorList>
    </citation>
    <scope>DISRUPTION PHENOTYPE</scope>
</reference>
<reference key="5">
    <citation type="journal article" date="1999" name="J. Biol. Chem.">
        <title>The RdeA-RegA system, a eukaryotic phospho-relay controlling cAMP breakdown.</title>
        <authorList>
            <person name="Thomason P.A."/>
            <person name="Traynor D."/>
            <person name="Stock J.B."/>
            <person name="Kay R.R."/>
        </authorList>
    </citation>
    <scope>DISRUPTION PHENOTYPE</scope>
    <scope>FUNCTION</scope>
    <scope>PHOSPHORYLATION</scope>
    <scope>MUTAGENESIS OF HIS-63 AND HIS-65</scope>
</reference>
<reference key="6">
    <citation type="journal article" date="2000" name="EMBO J.">
        <title>Osmotic stress response in Dictyostelium is mediated by cAMP.</title>
        <authorList>
            <person name="Ott A."/>
            <person name="Oehme F."/>
            <person name="Keller H."/>
            <person name="Schuster S.C."/>
        </authorList>
    </citation>
    <scope>DISRUPTION PHENOTYPE</scope>
</reference>
<reference key="7">
    <citation type="journal article" date="2006" name="Plasmid">
        <title>A series of Dictyostelium expression vectors for recombination cloning.</title>
        <authorList>
            <person name="Thomason P.A."/>
            <person name="Brazill D.T."/>
            <person name="Cox E.C."/>
        </authorList>
    </citation>
    <scope>DISRUPTION PHENOTYPE</scope>
</reference>
<reference key="8">
    <citation type="journal article" date="2007" name="Genome Biol.">
        <title>High-throughput analysis of spatio-temporal dynamics in Dictyostelium.</title>
        <authorList>
            <person name="Sawai S."/>
            <person name="Guan X.-J."/>
            <person name="Kuspa A."/>
            <person name="Cox E.C."/>
        </authorList>
    </citation>
    <scope>IDENTIFICATION</scope>
</reference>
<keyword id="KW-0963">Cytoplasm</keyword>
<keyword id="KW-0597">Phosphoprotein</keyword>
<keyword id="KW-1185">Reference proteome</keyword>
<protein>
    <recommendedName>
        <fullName>Phosphorelay intermediate protein rdeA</fullName>
    </recommendedName>
    <alternativeName>
        <fullName>Hpt domain-containing protein rdeA</fullName>
    </alternativeName>
    <alternativeName>
        <fullName>Rapid development protein A</fullName>
    </alternativeName>
</protein>
<proteinExistence type="evidence at protein level"/>